<reference key="1">
    <citation type="journal article" date="2005" name="Proc. Natl. Acad. Sci. U.S.A.">
        <title>The psychrophilic lifestyle as revealed by the genome sequence of Colwellia psychrerythraea 34H through genomic and proteomic analyses.</title>
        <authorList>
            <person name="Methe B.A."/>
            <person name="Nelson K.E."/>
            <person name="Deming J.W."/>
            <person name="Momen B."/>
            <person name="Melamud E."/>
            <person name="Zhang X."/>
            <person name="Moult J."/>
            <person name="Madupu R."/>
            <person name="Nelson W.C."/>
            <person name="Dodson R.J."/>
            <person name="Brinkac L.M."/>
            <person name="Daugherty S.C."/>
            <person name="Durkin A.S."/>
            <person name="DeBoy R.T."/>
            <person name="Kolonay J.F."/>
            <person name="Sullivan S.A."/>
            <person name="Zhou L."/>
            <person name="Davidsen T.M."/>
            <person name="Wu M."/>
            <person name="Huston A.L."/>
            <person name="Lewis M."/>
            <person name="Weaver B."/>
            <person name="Weidman J.F."/>
            <person name="Khouri H."/>
            <person name="Utterback T.R."/>
            <person name="Feldblyum T.V."/>
            <person name="Fraser C.M."/>
        </authorList>
    </citation>
    <scope>NUCLEOTIDE SEQUENCE [LARGE SCALE GENOMIC DNA]</scope>
    <source>
        <strain>34H / ATCC BAA-681</strain>
    </source>
</reference>
<dbReference type="EC" id="2.1.1.172" evidence="1"/>
<dbReference type="EMBL" id="CP000083">
    <property type="protein sequence ID" value="AAZ28742.1"/>
    <property type="molecule type" value="Genomic_DNA"/>
</dbReference>
<dbReference type="SMR" id="Q47VN0"/>
<dbReference type="STRING" id="167879.CPS_4494"/>
<dbReference type="KEGG" id="cps:CPS_4494"/>
<dbReference type="HOGENOM" id="CLU_049581_0_0_6"/>
<dbReference type="Proteomes" id="UP000000547">
    <property type="component" value="Chromosome"/>
</dbReference>
<dbReference type="GO" id="GO:0005737">
    <property type="term" value="C:cytoplasm"/>
    <property type="evidence" value="ECO:0007669"/>
    <property type="project" value="UniProtKB-SubCell"/>
</dbReference>
<dbReference type="GO" id="GO:0052914">
    <property type="term" value="F:16S rRNA (guanine(1207)-N(2))-methyltransferase activity"/>
    <property type="evidence" value="ECO:0007669"/>
    <property type="project" value="UniProtKB-EC"/>
</dbReference>
<dbReference type="GO" id="GO:0003676">
    <property type="term" value="F:nucleic acid binding"/>
    <property type="evidence" value="ECO:0007669"/>
    <property type="project" value="InterPro"/>
</dbReference>
<dbReference type="CDD" id="cd02440">
    <property type="entry name" value="AdoMet_MTases"/>
    <property type="match status" value="1"/>
</dbReference>
<dbReference type="Gene3D" id="3.40.50.150">
    <property type="entry name" value="Vaccinia Virus protein VP39"/>
    <property type="match status" value="2"/>
</dbReference>
<dbReference type="HAMAP" id="MF_01862">
    <property type="entry name" value="16SrRNA_methyltr_C"/>
    <property type="match status" value="1"/>
</dbReference>
<dbReference type="InterPro" id="IPR002052">
    <property type="entry name" value="DNA_methylase_N6_adenine_CS"/>
</dbReference>
<dbReference type="InterPro" id="IPR013675">
    <property type="entry name" value="Mtase_sm_N"/>
</dbReference>
<dbReference type="InterPro" id="IPR023543">
    <property type="entry name" value="rRNA_ssu_MeTfrase_C"/>
</dbReference>
<dbReference type="InterPro" id="IPR046977">
    <property type="entry name" value="RsmC/RlmG"/>
</dbReference>
<dbReference type="InterPro" id="IPR029063">
    <property type="entry name" value="SAM-dependent_MTases_sf"/>
</dbReference>
<dbReference type="InterPro" id="IPR007848">
    <property type="entry name" value="Small_mtfrase_dom"/>
</dbReference>
<dbReference type="PANTHER" id="PTHR47816">
    <property type="entry name" value="RIBOSOMAL RNA SMALL SUBUNIT METHYLTRANSFERASE C"/>
    <property type="match status" value="1"/>
</dbReference>
<dbReference type="PANTHER" id="PTHR47816:SF4">
    <property type="entry name" value="RIBOSOMAL RNA SMALL SUBUNIT METHYLTRANSFERASE C"/>
    <property type="match status" value="1"/>
</dbReference>
<dbReference type="Pfam" id="PF05175">
    <property type="entry name" value="MTS"/>
    <property type="match status" value="1"/>
</dbReference>
<dbReference type="Pfam" id="PF08468">
    <property type="entry name" value="MTS_N"/>
    <property type="match status" value="1"/>
</dbReference>
<dbReference type="SUPFAM" id="SSF53335">
    <property type="entry name" value="S-adenosyl-L-methionine-dependent methyltransferases"/>
    <property type="match status" value="1"/>
</dbReference>
<protein>
    <recommendedName>
        <fullName evidence="1">Ribosomal RNA small subunit methyltransferase C</fullName>
        <ecNumber evidence="1">2.1.1.172</ecNumber>
    </recommendedName>
    <alternativeName>
        <fullName evidence="1">16S rRNA m2G1207 methyltransferase</fullName>
    </alternativeName>
    <alternativeName>
        <fullName evidence="1">rRNA (guanine-N(2)-)-methyltransferase RsmC</fullName>
    </alternativeName>
</protein>
<sequence length="357" mass="39323">MSCPMSLSNPSQILLRNSELLVAKVPLFINLPEDGFIEAYTEIHKPDTIHCFNTNFIDYQAITKKHCSPTKTKNVKATFASTYQTTSCHDLVIIAFPKSKAELNFTLAMITHCINDETKIILVGEKKGGIQSAAKLTQHIFSCCQKVDAARHCLLFVGLFQPERLSDVFNLQDWFKKYQITVEGIELTIASLPGVFSQQKLDVGTALLLSNLPSKMTGKVLDFGCGAGVISCFIGKKFSGTNLSLLDVSALALTSAQESLALNGLSGNVFPSNSLSDVNEHYQHVVSNPPFHQGVKTHYQASEDFLAGINKKLNKQGNITIVANSFLRYQPIMETHIGNTRVITKDKGFTIYRAQLS</sequence>
<proteinExistence type="inferred from homology"/>
<accession>Q47VN0</accession>
<comment type="function">
    <text evidence="1">Specifically methylates the guanine in position 1207 of 16S rRNA in the 30S particle.</text>
</comment>
<comment type="catalytic activity">
    <reaction evidence="1">
        <text>guanosine(1207) in 16S rRNA + S-adenosyl-L-methionine = N(2)-methylguanosine(1207) in 16S rRNA + S-adenosyl-L-homocysteine + H(+)</text>
        <dbReference type="Rhea" id="RHEA:42736"/>
        <dbReference type="Rhea" id="RHEA-COMP:10213"/>
        <dbReference type="Rhea" id="RHEA-COMP:10214"/>
        <dbReference type="ChEBI" id="CHEBI:15378"/>
        <dbReference type="ChEBI" id="CHEBI:57856"/>
        <dbReference type="ChEBI" id="CHEBI:59789"/>
        <dbReference type="ChEBI" id="CHEBI:74269"/>
        <dbReference type="ChEBI" id="CHEBI:74481"/>
        <dbReference type="EC" id="2.1.1.172"/>
    </reaction>
</comment>
<comment type="subunit">
    <text evidence="1">Monomer.</text>
</comment>
<comment type="subcellular location">
    <subcellularLocation>
        <location evidence="1">Cytoplasm</location>
    </subcellularLocation>
</comment>
<comment type="similarity">
    <text evidence="1">Belongs to the methyltransferase superfamily. RsmC family.</text>
</comment>
<feature type="chain" id="PRO_0000369693" description="Ribosomal RNA small subunit methyltransferase C">
    <location>
        <begin position="1"/>
        <end position="357"/>
    </location>
</feature>
<name>RSMC_COLP3</name>
<organism>
    <name type="scientific">Colwellia psychrerythraea (strain 34H / ATCC BAA-681)</name>
    <name type="common">Vibrio psychroerythus</name>
    <dbReference type="NCBI Taxonomy" id="167879"/>
    <lineage>
        <taxon>Bacteria</taxon>
        <taxon>Pseudomonadati</taxon>
        <taxon>Pseudomonadota</taxon>
        <taxon>Gammaproteobacteria</taxon>
        <taxon>Alteromonadales</taxon>
        <taxon>Colwelliaceae</taxon>
        <taxon>Colwellia</taxon>
    </lineage>
</organism>
<gene>
    <name evidence="1" type="primary">rsmC</name>
    <name type="ordered locus">CPS_4494</name>
</gene>
<evidence type="ECO:0000255" key="1">
    <source>
        <dbReference type="HAMAP-Rule" id="MF_01862"/>
    </source>
</evidence>
<keyword id="KW-0963">Cytoplasm</keyword>
<keyword id="KW-0489">Methyltransferase</keyword>
<keyword id="KW-0698">rRNA processing</keyword>
<keyword id="KW-0949">S-adenosyl-L-methionine</keyword>
<keyword id="KW-0808">Transferase</keyword>